<dbReference type="EC" id="3.4.21.97" evidence="3"/>
<dbReference type="EMBL" id="X64346">
    <property type="protein sequence ID" value="CAA45641.1"/>
    <property type="molecule type" value="Genomic_DNA"/>
</dbReference>
<dbReference type="RefSeq" id="NP_040219.1">
    <property type="nucleotide sequence ID" value="NC_001350.1"/>
</dbReference>
<dbReference type="SMR" id="Q01002"/>
<dbReference type="MEROPS" id="S21.006"/>
<dbReference type="KEGG" id="vg:1682498"/>
<dbReference type="Proteomes" id="UP000000587">
    <property type="component" value="Segment"/>
</dbReference>
<dbReference type="GO" id="GO:0030430">
    <property type="term" value="C:host cell cytoplasm"/>
    <property type="evidence" value="ECO:0007669"/>
    <property type="project" value="UniProtKB-SubCell"/>
</dbReference>
<dbReference type="GO" id="GO:0042025">
    <property type="term" value="C:host cell nucleus"/>
    <property type="evidence" value="ECO:0007669"/>
    <property type="project" value="UniProtKB-SubCell"/>
</dbReference>
<dbReference type="GO" id="GO:0042802">
    <property type="term" value="F:identical protein binding"/>
    <property type="evidence" value="ECO:0007669"/>
    <property type="project" value="UniProtKB-UniRule"/>
</dbReference>
<dbReference type="GO" id="GO:0004252">
    <property type="term" value="F:serine-type endopeptidase activity"/>
    <property type="evidence" value="ECO:0007669"/>
    <property type="project" value="UniProtKB-UniRule"/>
</dbReference>
<dbReference type="GO" id="GO:0039708">
    <property type="term" value="P:nuclear capsid assembly"/>
    <property type="evidence" value="ECO:0007669"/>
    <property type="project" value="UniProtKB-ARBA"/>
</dbReference>
<dbReference type="GO" id="GO:0006508">
    <property type="term" value="P:proteolysis"/>
    <property type="evidence" value="ECO:0007669"/>
    <property type="project" value="UniProtKB-KW"/>
</dbReference>
<dbReference type="GO" id="GO:0019076">
    <property type="term" value="P:viral release from host cell"/>
    <property type="evidence" value="ECO:0007669"/>
    <property type="project" value="UniProtKB-UniRule"/>
</dbReference>
<dbReference type="Gene3D" id="3.20.16.10">
    <property type="entry name" value="Herpesvirus/Caudovirus protease domain"/>
    <property type="match status" value="1"/>
</dbReference>
<dbReference type="HAMAP" id="MF_04008">
    <property type="entry name" value="HSV_SCAF"/>
    <property type="match status" value="1"/>
</dbReference>
<dbReference type="InterPro" id="IPR035443">
    <property type="entry name" value="Herpes_virus_sf"/>
</dbReference>
<dbReference type="InterPro" id="IPR001847">
    <property type="entry name" value="Peptidase_S21"/>
</dbReference>
<dbReference type="Pfam" id="PF00716">
    <property type="entry name" value="Peptidase_S21"/>
    <property type="match status" value="1"/>
</dbReference>
<dbReference type="PRINTS" id="PR00236">
    <property type="entry name" value="HSVCAPSIDP40"/>
</dbReference>
<dbReference type="SUPFAM" id="SSF50789">
    <property type="entry name" value="Herpes virus serine proteinase, assemblin"/>
    <property type="match status" value="1"/>
</dbReference>
<evidence type="ECO:0000250" key="1"/>
<evidence type="ECO:0000250" key="2">
    <source>
        <dbReference type="UniProtKB" id="P16753"/>
    </source>
</evidence>
<evidence type="ECO:0000255" key="3">
    <source>
        <dbReference type="HAMAP-Rule" id="MF_04008"/>
    </source>
</evidence>
<evidence type="ECO:0000256" key="4">
    <source>
        <dbReference type="SAM" id="MobiDB-lite"/>
    </source>
</evidence>
<evidence type="ECO:0000305" key="5"/>
<accession>Q01002</accession>
<comment type="function">
    <molecule>Capsid scaffolding protein</molecule>
    <text evidence="3">Acts as a scaffold protein by binding major capsid protein in the cytoplasm, inducing the nuclear localization of both proteins. Multimerizes in the nucleus such as major capsid protein forms the icosahedral T=16 capsid. Autocatalytic cleavage releases the assembly protein, and subsequently abolishes interaction with major capsid protein. Cleavages products are evicted from the capsid before or during DNA packaging.</text>
</comment>
<comment type="function">
    <molecule>Assemblin</molecule>
    <text evidence="3">Protease that plays an essential role in virion assembly within the nucleus. Catalyzes the cleavage of the assembly protein after formation of the spherical procapsid. By that cleavage, the capsid matures and gains its icosahedral shape. The cleavage sites seem to include -Ala-Ser-, -Ala-Ala-, as well as Ala-Thr bonds. Assemblin and cleavages products are evicted from the capsid before or during DNA packaging.</text>
</comment>
<comment type="function">
    <molecule>Assembly protein</molecule>
    <text evidence="3">Plays a major role in capsid assembly. Acts as a scaffold protein by binding major capsid protein. Multimerizes in the nucleus such as major capsid protein forms the icosahedral T=16 capsid. Cleaved by assemblin after capsid completion. The cleavages products are evicted from the capsid before or during DNA packaging.</text>
</comment>
<comment type="catalytic activity">
    <molecule>Assemblin</molecule>
    <reaction evidence="3">
        <text>Cleaves -Ala-|-Ser- and -Ala-|-Ala- bonds in the scaffold protein.</text>
        <dbReference type="EC" id="3.4.21.97"/>
    </reaction>
</comment>
<comment type="subunit">
    <molecule>Capsid scaffolding protein</molecule>
    <text evidence="3">Homomultimer. Interacts with major capsid protein.</text>
</comment>
<comment type="subunit">
    <molecule>Assemblin</molecule>
    <text evidence="3">Exists in a monomer-dimer equilibrium with the dimer being the active species.</text>
</comment>
<comment type="subunit">
    <molecule>Assembly protein</molecule>
    <text evidence="3">Homomultimer. Interacts with major capsid protein.</text>
</comment>
<comment type="subcellular location">
    <molecule>Capsid scaffolding protein</molecule>
    <subcellularLocation>
        <location evidence="3">Host cytoplasm</location>
    </subcellularLocation>
</comment>
<comment type="subcellular location">
    <molecule>Assemblin</molecule>
    <subcellularLocation>
        <location evidence="3">Host nucleus</location>
    </subcellularLocation>
</comment>
<comment type="subcellular location">
    <molecule>Assembly protein</molecule>
    <subcellularLocation>
        <location evidence="3">Host nucleus</location>
    </subcellularLocation>
</comment>
<comment type="alternative products">
    <event type="alternative promoter"/>
    <isoform>
        <id>Q01002-1</id>
        <name>Capsid scaffolding protein</name>
        <name>pPR</name>
        <sequence type="displayed"/>
    </isoform>
    <isoform>
        <id>Q01002-2</id>
        <name>pAP</name>
        <name>Assembly protein</name>
        <sequence type="described" ref="VSP_037422"/>
    </isoform>
</comment>
<comment type="domain">
    <text evidence="3">Region of interaction between pPR and pAP is called Amino conserved domain (ACD). The region of interaction with major capsid protein is called carboxyl conserved domain (CCD).</text>
</comment>
<comment type="PTM">
    <molecule>Capsid scaffolding protein</molecule>
    <text evidence="3">Capsid scaffolding protein is cleaved by assemblin after formation of the spherical procapsid. As a result, the capsid obtains its mature, icosahedral shape. Cleavages occur at two or more sites: release (R-site) and maturation (M-site).</text>
</comment>
<comment type="similarity">
    <text evidence="3">Belongs to the herpesviridae capsid scaffolding protein family.</text>
</comment>
<sequence>MSIVYVAGFVDVVAYPKVDPVLYLNLDDVSKCLPLTKPIPLNIEHLPESTIGHTIGLYAVTHGVFCVGVIHSEKFLHLTENLFSNSCVAQATSKFLPYQPLLEMLHTWLPALSLSSLCPTAQNAANTNMFQHVSLCALGRRRGTVAVYSMNLEDAISQFCSISQAEVENIYQDSKNVDINSLPKPVFNIDPHILMAKAIDAGFIKDRLQLLKTDKGVAKIKKLTYLKASEIGKPVTEDISEDMNQHGIVPQGSDDLISVPKSTFLSMLQNNLDNFKQHPRPACFPQYFSPQGAYMPYELYPPQPYSGDNIGYMLPSGSYVPAMFPSRPNKRKREDFDDCVFPGESSLYKDVLNLTKNISQLQDDLKDLKQAAINQPNRYPPHHFSNPYSLDPGHASYFRYAPYGAPKPDQHLLQPLACVQQAPVVQPNYAPPPTEGASNEAPKPSVQEPVHIDASFAQDPVSKLQKMFCDELLNK</sequence>
<organism>
    <name type="scientific">Saimiriine herpesvirus 2 (strain 11)</name>
    <name type="common">SaHV-2</name>
    <name type="synonym">Herpesvirus saimiri</name>
    <dbReference type="NCBI Taxonomy" id="10383"/>
    <lineage>
        <taxon>Viruses</taxon>
        <taxon>Duplodnaviria</taxon>
        <taxon>Heunggongvirae</taxon>
        <taxon>Peploviricota</taxon>
        <taxon>Herviviricetes</taxon>
        <taxon>Herpesvirales</taxon>
        <taxon>Orthoherpesviridae</taxon>
        <taxon>Gammaherpesvirinae</taxon>
        <taxon>Rhadinovirus</taxon>
        <taxon>Rhadinovirus saimiriinegamma2</taxon>
        <taxon>Saimiriine herpesvirus 2</taxon>
    </lineage>
</organism>
<reference key="1">
    <citation type="journal article" date="1992" name="J. Virol.">
        <title>Primary structure of the herpesvirus saimiri genome.</title>
        <authorList>
            <person name="Albrecht J.-C."/>
            <person name="Nicholas J."/>
            <person name="Biller D."/>
            <person name="Cameron K.R."/>
            <person name="Biesinger B."/>
            <person name="Newman C."/>
            <person name="Wittmann S."/>
            <person name="Craxton M.A."/>
            <person name="Coleman H."/>
            <person name="Fleckenstein B."/>
            <person name="Honess R.W."/>
        </authorList>
    </citation>
    <scope>NUCLEOTIDE SEQUENCE [LARGE SCALE GENOMIC DNA]</scope>
</reference>
<keyword id="KW-0877">Alternative promoter usage</keyword>
<keyword id="KW-1035">Host cytoplasm</keyword>
<keyword id="KW-1048">Host nucleus</keyword>
<keyword id="KW-0378">Hydrolase</keyword>
<keyword id="KW-0597">Phosphoprotein</keyword>
<keyword id="KW-0645">Protease</keyword>
<keyword id="KW-1185">Reference proteome</keyword>
<keyword id="KW-0720">Serine protease</keyword>
<keyword id="KW-0118">Viral capsid assembly</keyword>
<keyword id="KW-1188">Viral release from host cell</keyword>
<name>SCAF_SHV21</name>
<proteinExistence type="inferred from homology"/>
<organismHost>
    <name type="scientific">Saimiri sciureus</name>
    <name type="common">Common squirrel monkey</name>
    <dbReference type="NCBI Taxonomy" id="9521"/>
</organismHost>
<gene>
    <name type="primary">17</name>
</gene>
<feature type="chain" id="PRO_0000376804" description="Capsid scaffolding protein">
    <location>
        <begin position="1"/>
        <end position="475"/>
    </location>
</feature>
<feature type="chain" id="PRO_0000027276" description="Assemblin" evidence="3">
    <location>
        <begin position="1"/>
        <end position="228"/>
    </location>
</feature>
<feature type="chain" id="PRO_0000027277" description="Assembly protein" evidence="3">
    <location>
        <begin position="229"/>
        <end position="475"/>
    </location>
</feature>
<feature type="region of interest" description="Interaction with pAP" evidence="3">
    <location>
        <begin position="254"/>
        <end position="273"/>
    </location>
</feature>
<feature type="region of interest" description="Disordered" evidence="4">
    <location>
        <begin position="426"/>
        <end position="454"/>
    </location>
</feature>
<feature type="region of interest" description="Interaction with major capsid protein" evidence="3">
    <location>
        <begin position="455"/>
        <end position="475"/>
    </location>
</feature>
<feature type="short sequence motif" description="Nuclear localization signal" evidence="1">
    <location>
        <begin position="327"/>
        <end position="333"/>
    </location>
</feature>
<feature type="active site" description="Charge relay system" evidence="3">
    <location>
        <position position="45"/>
    </location>
</feature>
<feature type="active site" description="Charge relay system" evidence="3">
    <location>
        <position position="113"/>
    </location>
</feature>
<feature type="active site" description="Charge relay system" evidence="3">
    <location>
        <position position="132"/>
    </location>
</feature>
<feature type="site" description="Cleavage; by assemblin; Release site" evidence="3">
    <location>
        <begin position="228"/>
        <end position="229"/>
    </location>
</feature>
<feature type="site" description="Cleavage; by assemblin; Maturation site" evidence="2">
    <location>
        <begin position="454"/>
        <end position="455"/>
    </location>
</feature>
<feature type="splice variant" id="VSP_037422" description="In isoform pAP." evidence="5">
    <location>
        <begin position="1"/>
        <end position="242"/>
    </location>
</feature>
<protein>
    <recommendedName>
        <fullName evidence="3">Capsid scaffolding protein</fullName>
    </recommendedName>
    <alternativeName>
        <fullName>Capsid protein P40</fullName>
    </alternativeName>
    <alternativeName>
        <fullName evidence="3">Protease precursor</fullName>
        <shortName evidence="3">pPR</shortName>
    </alternativeName>
    <component>
        <recommendedName>
            <fullName evidence="3">Assemblin</fullName>
            <ecNumber evidence="3">3.4.21.97</ecNumber>
        </recommendedName>
        <alternativeName>
            <fullName>Capsid protein VP24</fullName>
        </alternativeName>
        <alternativeName>
            <fullName evidence="3">Protease</fullName>
            <shortName evidence="3">Pr</shortName>
        </alternativeName>
    </component>
    <component>
        <recommendedName>
            <fullName evidence="3">Assembly protein</fullName>
            <shortName evidence="3">AP</shortName>
        </recommendedName>
        <alternativeName>
            <fullName evidence="3">Capsid assembly protein</fullName>
        </alternativeName>
        <alternativeName>
            <fullName>Capsid protein VP22A</fullName>
        </alternativeName>
    </component>
</protein>